<sequence>MNFDMSKLMQQAQKMQEQMKKAQQERENMEVIGESGAGLVTVTMTGKYDVKSVSIDNSLMSEDKEILEDLIAAAVNSAVKKVEENSTASSNIYKMAKDAGIDLPSGINFPFK</sequence>
<dbReference type="EMBL" id="CP000437">
    <property type="protein sequence ID" value="ABI83198.1"/>
    <property type="molecule type" value="Genomic_DNA"/>
</dbReference>
<dbReference type="RefSeq" id="WP_003016682.1">
    <property type="nucleotide sequence ID" value="NC_017463.1"/>
</dbReference>
<dbReference type="SMR" id="Q0BL36"/>
<dbReference type="KEGG" id="fth:FTH_1374"/>
<dbReference type="GO" id="GO:0043590">
    <property type="term" value="C:bacterial nucleoid"/>
    <property type="evidence" value="ECO:0007669"/>
    <property type="project" value="UniProtKB-UniRule"/>
</dbReference>
<dbReference type="GO" id="GO:0005829">
    <property type="term" value="C:cytosol"/>
    <property type="evidence" value="ECO:0007669"/>
    <property type="project" value="TreeGrafter"/>
</dbReference>
<dbReference type="GO" id="GO:0003677">
    <property type="term" value="F:DNA binding"/>
    <property type="evidence" value="ECO:0007669"/>
    <property type="project" value="UniProtKB-UniRule"/>
</dbReference>
<dbReference type="Gene3D" id="3.30.1310.10">
    <property type="entry name" value="Nucleoid-associated protein YbaB-like domain"/>
    <property type="match status" value="1"/>
</dbReference>
<dbReference type="HAMAP" id="MF_00274">
    <property type="entry name" value="DNA_YbaB_EbfC"/>
    <property type="match status" value="1"/>
</dbReference>
<dbReference type="InterPro" id="IPR036894">
    <property type="entry name" value="YbaB-like_sf"/>
</dbReference>
<dbReference type="InterPro" id="IPR004401">
    <property type="entry name" value="YbaB/EbfC"/>
</dbReference>
<dbReference type="NCBIfam" id="TIGR00103">
    <property type="entry name" value="DNA_YbaB_EbfC"/>
    <property type="match status" value="1"/>
</dbReference>
<dbReference type="PANTHER" id="PTHR33449">
    <property type="entry name" value="NUCLEOID-ASSOCIATED PROTEIN YBAB"/>
    <property type="match status" value="1"/>
</dbReference>
<dbReference type="PANTHER" id="PTHR33449:SF1">
    <property type="entry name" value="NUCLEOID-ASSOCIATED PROTEIN YBAB"/>
    <property type="match status" value="1"/>
</dbReference>
<dbReference type="Pfam" id="PF02575">
    <property type="entry name" value="YbaB_DNA_bd"/>
    <property type="match status" value="1"/>
</dbReference>
<dbReference type="PIRSF" id="PIRSF004555">
    <property type="entry name" value="UCP004555"/>
    <property type="match status" value="1"/>
</dbReference>
<dbReference type="SUPFAM" id="SSF82607">
    <property type="entry name" value="YbaB-like"/>
    <property type="match status" value="1"/>
</dbReference>
<comment type="function">
    <text evidence="1">Binds to DNA and alters its conformation. May be involved in regulation of gene expression, nucleoid organization and DNA protection.</text>
</comment>
<comment type="subunit">
    <text evidence="1">Homodimer.</text>
</comment>
<comment type="subcellular location">
    <subcellularLocation>
        <location evidence="1">Cytoplasm</location>
        <location evidence="1">Nucleoid</location>
    </subcellularLocation>
</comment>
<comment type="similarity">
    <text evidence="1">Belongs to the YbaB/EbfC family.</text>
</comment>
<organism>
    <name type="scientific">Francisella tularensis subsp. holarctica (strain OSU18)</name>
    <dbReference type="NCBI Taxonomy" id="393011"/>
    <lineage>
        <taxon>Bacteria</taxon>
        <taxon>Pseudomonadati</taxon>
        <taxon>Pseudomonadota</taxon>
        <taxon>Gammaproteobacteria</taxon>
        <taxon>Thiotrichales</taxon>
        <taxon>Francisellaceae</taxon>
        <taxon>Francisella</taxon>
    </lineage>
</organism>
<accession>Q0BL36</accession>
<feature type="chain" id="PRO_1000071917" description="Nucleoid-associated protein FTH_1374">
    <location>
        <begin position="1"/>
        <end position="112"/>
    </location>
</feature>
<feature type="region of interest" description="Disordered" evidence="2">
    <location>
        <begin position="1"/>
        <end position="27"/>
    </location>
</feature>
<feature type="compositionally biased region" description="Basic and acidic residues" evidence="2">
    <location>
        <begin position="17"/>
        <end position="27"/>
    </location>
</feature>
<protein>
    <recommendedName>
        <fullName evidence="1">Nucleoid-associated protein FTH_1374</fullName>
    </recommendedName>
</protein>
<gene>
    <name type="ordered locus">FTH_1374</name>
</gene>
<proteinExistence type="inferred from homology"/>
<keyword id="KW-0963">Cytoplasm</keyword>
<keyword id="KW-0238">DNA-binding</keyword>
<evidence type="ECO:0000255" key="1">
    <source>
        <dbReference type="HAMAP-Rule" id="MF_00274"/>
    </source>
</evidence>
<evidence type="ECO:0000256" key="2">
    <source>
        <dbReference type="SAM" id="MobiDB-lite"/>
    </source>
</evidence>
<name>Y1374_FRATO</name>
<reference key="1">
    <citation type="journal article" date="2006" name="J. Bacteriol.">
        <title>Chromosome rearrangement and diversification of Francisella tularensis revealed by the type B (OSU18) genome sequence.</title>
        <authorList>
            <person name="Petrosino J.F."/>
            <person name="Xiang Q."/>
            <person name="Karpathy S.E."/>
            <person name="Jiang H."/>
            <person name="Yerrapragada S."/>
            <person name="Liu Y."/>
            <person name="Gioia J."/>
            <person name="Hemphill L."/>
            <person name="Gonzalez A."/>
            <person name="Raghavan T.M."/>
            <person name="Uzman A."/>
            <person name="Fox G.E."/>
            <person name="Highlander S."/>
            <person name="Reichard M."/>
            <person name="Morton R.J."/>
            <person name="Clinkenbeard K.D."/>
            <person name="Weinstock G.M."/>
        </authorList>
    </citation>
    <scope>NUCLEOTIDE SEQUENCE [LARGE SCALE GENOMIC DNA]</scope>
    <source>
        <strain>OSU18</strain>
    </source>
</reference>